<organismHost>
    <name type="scientific">Capsicum annuum</name>
    <name type="common">Capsicum pepper</name>
    <dbReference type="NCBI Taxonomy" id="4072"/>
</organismHost>
<organismHost>
    <name type="scientific">Malus</name>
    <dbReference type="NCBI Taxonomy" id="3749"/>
</organismHost>
<organismHost>
    <name type="scientific">Pyrus</name>
    <name type="common">pears</name>
    <dbReference type="NCBI Taxonomy" id="3766"/>
</organismHost>
<organismHost>
    <name type="scientific">Solanum lycopersicum</name>
    <name type="common">Tomato</name>
    <name type="synonym">Lycopersicon esculentum</name>
    <dbReference type="NCBI Taxonomy" id="4081"/>
</organismHost>
<organismHost>
    <name type="scientific">Solanum melongena</name>
    <name type="common">eggplant</name>
    <dbReference type="NCBI Taxonomy" id="4111"/>
</organismHost>
<organismHost>
    <name type="scientific">Tolmiea menziesii</name>
    <dbReference type="NCBI Taxonomy" id="29777"/>
</organismHost>
<organismHost>
    <name type="scientific">Tulipa</name>
    <dbReference type="NCBI Taxonomy" id="13305"/>
</organismHost>
<dbReference type="EMBL" id="M21958">
    <property type="protein sequence ID" value="AAB02537.1"/>
    <property type="molecule type" value="Genomic_RNA"/>
</dbReference>
<dbReference type="PIR" id="JA0115">
    <property type="entry name" value="NKVGTB"/>
</dbReference>
<dbReference type="RefSeq" id="NP_062900.1">
    <property type="nucleotide sequence ID" value="NC_001554.1"/>
</dbReference>
<dbReference type="GeneID" id="1493954"/>
<dbReference type="KEGG" id="vg:1493954"/>
<dbReference type="Proteomes" id="UP000001666">
    <property type="component" value="Segment"/>
</dbReference>
<dbReference type="GO" id="GO:0033644">
    <property type="term" value="C:host cell membrane"/>
    <property type="evidence" value="ECO:0007669"/>
    <property type="project" value="UniProtKB-SubCell"/>
</dbReference>
<dbReference type="GO" id="GO:0016020">
    <property type="term" value="C:membrane"/>
    <property type="evidence" value="ECO:0007669"/>
    <property type="project" value="UniProtKB-KW"/>
</dbReference>
<dbReference type="GO" id="GO:0019028">
    <property type="term" value="C:viral capsid"/>
    <property type="evidence" value="ECO:0007669"/>
    <property type="project" value="InterPro"/>
</dbReference>
<dbReference type="GO" id="GO:0003723">
    <property type="term" value="F:RNA binding"/>
    <property type="evidence" value="ECO:0007669"/>
    <property type="project" value="UniProtKB-KW"/>
</dbReference>
<dbReference type="GO" id="GO:0046740">
    <property type="term" value="P:transport of virus in host, cell to cell"/>
    <property type="evidence" value="ECO:0007669"/>
    <property type="project" value="UniProtKB-KW"/>
</dbReference>
<dbReference type="InterPro" id="IPR005332">
    <property type="entry name" value="TBSV_p22"/>
</dbReference>
<dbReference type="Pfam" id="PF03558">
    <property type="entry name" value="TBSV_P22"/>
    <property type="match status" value="1"/>
</dbReference>
<comment type="function">
    <text evidence="1">Transports viral genome to neighboring plant cells directly through plasmosdesmata, without any budding. The movement protein allows efficient cell to cell propagation, by bypassing the host cell wall barrier. Displays RNA-binding activity.</text>
</comment>
<comment type="subunit">
    <text evidence="1">Interacts with host protein HFI22.</text>
</comment>
<comment type="subcellular location">
    <subcellularLocation>
        <location evidence="1">Host membrane</location>
    </subcellularLocation>
</comment>
<comment type="PTM">
    <text evidence="1">Phosphorylated.</text>
</comment>
<comment type="similarity">
    <text evidence="2">Belongs to the tombusvirus/aureusvirus movement protein p22 family.</text>
</comment>
<organism>
    <name type="scientific">Tomato bushy stunt virus (strain Cherry)</name>
    <name type="common">TBSV</name>
    <dbReference type="NCBI Taxonomy" id="12147"/>
    <lineage>
        <taxon>Viruses</taxon>
        <taxon>Riboviria</taxon>
        <taxon>Orthornavirae</taxon>
        <taxon>Kitrinoviricota</taxon>
        <taxon>Tolucaviricetes</taxon>
        <taxon>Tolivirales</taxon>
        <taxon>Tombusviridae</taxon>
        <taxon>Procedovirinae</taxon>
        <taxon>Tombusvirus</taxon>
        <taxon>Tombusvirus lycopersici</taxon>
    </lineage>
</organism>
<name>MVP_TBSVC</name>
<reference key="1">
    <citation type="journal article" date="1989" name="Virology">
        <title>Organization of tomato bushy stunt virus genome: characterization of the coat protein gene and the 3' terminus.</title>
        <authorList>
            <person name="Hillman B.I."/>
            <person name="Hearne P.Q."/>
            <person name="Rochon D."/>
            <person name="Morris T.J."/>
        </authorList>
    </citation>
    <scope>NUCLEOTIDE SEQUENCE [GENOMIC RNA]</scope>
</reference>
<reference key="2">
    <citation type="journal article" date="1990" name="Virology">
        <title>The complete genome structure and synthesis of infectious RNA from clones of tomato bushy stunt virus.</title>
        <authorList>
            <person name="Hearne P.Q."/>
            <person name="Knorr D.A."/>
            <person name="Hillman B.I."/>
            <person name="Morris T.J."/>
        </authorList>
    </citation>
    <scope>NUCLEOTIDE SEQUENCE [GENOMIC RNA]</scope>
</reference>
<reference key="3">
    <citation type="journal article" date="2002" name="Plant Physiol.">
        <title>A novel plant homeodomain protein interacts in a functionally relevant manner with a virus movement protein.</title>
        <authorList>
            <person name="Desvoyes B."/>
            <person name="Faure-Rabasse S."/>
            <person name="Chen M.H."/>
            <person name="Park J.W."/>
            <person name="Scholthof H.B."/>
        </authorList>
    </citation>
    <scope>FUNCTION</scope>
    <scope>SUBCELLULAR LOCATION</scope>
    <scope>RNA-BINDING</scope>
    <scope>PHOSPHORYLATION</scope>
    <scope>MUTAGENESIS OF 2-ASP--GLU-6; 32-GLU--GLU-35 AND GLU-103</scope>
    <scope>INTERACTION WITH NICOTIANA BENTHAMIANA PROTEIN HFI22</scope>
</reference>
<evidence type="ECO:0000269" key="1">
    <source>
    </source>
</evidence>
<evidence type="ECO:0000305" key="2"/>
<keyword id="KW-1043">Host membrane</keyword>
<keyword id="KW-0945">Host-virus interaction</keyword>
<keyword id="KW-0472">Membrane</keyword>
<keyword id="KW-0597">Phosphoprotein</keyword>
<keyword id="KW-1185">Reference proteome</keyword>
<keyword id="KW-0694">RNA-binding</keyword>
<keyword id="KW-0813">Transport</keyword>
<keyword id="KW-0916">Viral movement protein</keyword>
<sequence>MDTEYEQVNKPWNELYKETTLGNKLTVNVGMEDQEVPLLPSNFLTKVRVGLSGGYITMRRIRIKIIPLVSRKAGVSGKLYLRDISDTTGRKLHCTESLDLGREIRLTMQHLDFSVSTRSDVPIVFGFEELVSPFLEGRELFSISVRWQFGLSKNCYSLPQSKWKVMYQEDALKVLRPSKKKASKTDSSV</sequence>
<accession>P11691</accession>
<proteinExistence type="evidence at protein level"/>
<protein>
    <recommendedName>
        <fullName>Movement protein</fullName>
    </recommendedName>
    <alternativeName>
        <fullName>p22</fullName>
    </alternativeName>
</protein>
<feature type="chain" id="PRO_0000222891" description="Movement protein">
    <location>
        <begin position="1"/>
        <end position="189"/>
    </location>
</feature>
<feature type="mutagenesis site" description="Movement defective. No effect on interaction with host protein HFI22. No effect on association with host membrane." evidence="1">
    <original>DTEYE</original>
    <variation>ATAYA</variation>
    <location>
        <begin position="2"/>
        <end position="6"/>
    </location>
</feature>
<feature type="mutagenesis site" description="Movement defective. Loss of interaction with host protein HFI22." evidence="1">
    <original>EDQE</original>
    <variation>AAQA</variation>
    <location>
        <begin position="32"/>
        <end position="35"/>
    </location>
</feature>
<feature type="mutagenesis site" description="Movement defective. Loss of interaction with host protein HFI22. No effect on association with host membrane." evidence="1">
    <original>E</original>
    <variation>A</variation>
    <location>
        <position position="103"/>
    </location>
</feature>